<comment type="function">
    <text evidence="9 10 11 12">Lipid-binding protein required for SHH long-range signaling by binding to the dually lipid-modified SHH (ShhNp) and by promoting ShhNp mobilization, solubilization and release from the cell membrane (PubMed:22677548, PubMed:22902404). Acts by enhancing the proteolytic processing (shedding) of the lipid-modified N- and C- terminal of ShhNp at the cell surface (PubMed:24522195). Synergizes with DISP1 to cause an increase in SHH secretion (PubMed:22902404). Probable cell surface coreceptor for VEGFR2 involved in VEGFR2-mediated angiogenesis (PubMed:27834687).</text>
</comment>
<comment type="subunit">
    <text evidence="2 3 10 12">Interacts with SHH via the cholesterol anchor of the dually lipid-modified SHH (ShhNp) (PubMed:22902404). Interacts with PTCH1 (PubMed:22902404). Forms homooligomers and heterooligomers with SCUBE1 and SCUBE3 (By similarity). Interacts with VEGFR2 (PubMed:27834687).</text>
</comment>
<comment type="subcellular location">
    <subcellularLocation>
        <location evidence="4">Secreted</location>
    </subcellularLocation>
    <subcellularLocation>
        <location evidence="4">Cell surface</location>
    </subcellularLocation>
    <text evidence="4">Secreted and tethered at the cell surface.</text>
</comment>
<comment type="tissue specificity">
    <text evidence="8">Expressed in adult heart, lung and testis.</text>
</comment>
<comment type="developmental stage">
    <text evidence="8">Expressed exclusively in the neurepithelium.</text>
</comment>
<comment type="domain">
    <text evidence="11">The CUB domain is important for the interaction with the cholesterol-anchor of SHH. The CUB domain regulates protease recruitment and activation during SHH shedding.</text>
</comment>
<comment type="PTM">
    <text evidence="4">N-glycosylated.</text>
</comment>
<comment type="disruption phenotype">
    <text evidence="12">Mutant mice with endothelial-specific inactivation of Scube2 show normal vasculogenesis and angiogenesis during embryonic development, but impaired response to exogenous VEGF, and impaired response of the endothelium to revascularization after ischemia induced by femoral artery ligation in adult (PubMed:27834687).</text>
</comment>
<comment type="caution">
    <text evidence="9 10">It is unclear how SCUBE2 binds the dilipidated SHH. According to a report, the SHH cholesterol-anchor, but not palmitate, seems to be both necessary and sufficient for SCUBE2-mediated SHH release from the cell membrane (PubMed:22902404). According to a second report, SHH palmitoylation accelerates the rate of SCUBE2-mediated release (PubMed:22677548). Cholesterol modification is sufficient for a heterologous protein to bind to SCUBE2 and to be secreted in a SCUBE2-dependent manner (PubMed:22902404).</text>
</comment>
<proteinExistence type="evidence at protein level"/>
<evidence type="ECO:0000250" key="1"/>
<evidence type="ECO:0000250" key="2">
    <source>
        <dbReference type="UniProtKB" id="Q8IWY4"/>
    </source>
</evidence>
<evidence type="ECO:0000250" key="3">
    <source>
        <dbReference type="UniProtKB" id="Q8IX30"/>
    </source>
</evidence>
<evidence type="ECO:0000250" key="4">
    <source>
        <dbReference type="UniProtKB" id="Q9NQ36"/>
    </source>
</evidence>
<evidence type="ECO:0000255" key="5"/>
<evidence type="ECO:0000255" key="6">
    <source>
        <dbReference type="PROSITE-ProRule" id="PRU00059"/>
    </source>
</evidence>
<evidence type="ECO:0000255" key="7">
    <source>
        <dbReference type="PROSITE-ProRule" id="PRU00076"/>
    </source>
</evidence>
<evidence type="ECO:0000269" key="8">
    <source>
    </source>
</evidence>
<evidence type="ECO:0000269" key="9">
    <source>
    </source>
</evidence>
<evidence type="ECO:0000269" key="10">
    <source>
    </source>
</evidence>
<evidence type="ECO:0000269" key="11">
    <source>
    </source>
</evidence>
<evidence type="ECO:0000269" key="12">
    <source>
    </source>
</evidence>
<evidence type="ECO:0000303" key="13">
    <source>
    </source>
</evidence>
<evidence type="ECO:0000312" key="14">
    <source>
        <dbReference type="MGI" id="MGI:1928765"/>
    </source>
</evidence>
<feature type="signal peptide" evidence="5">
    <location>
        <begin position="1"/>
        <end position="28"/>
    </location>
</feature>
<feature type="chain" id="PRO_0000255581" description="Signal peptide, CUB and EGF-like domain-containing protein 2">
    <location>
        <begin position="29"/>
        <end position="997"/>
    </location>
</feature>
<feature type="domain" description="EGF-like 1; calcium-binding" evidence="7">
    <location>
        <begin position="43"/>
        <end position="83"/>
    </location>
</feature>
<feature type="domain" description="EGF-like 2; calcium-binding" evidence="7">
    <location>
        <begin position="84"/>
        <end position="125"/>
    </location>
</feature>
<feature type="domain" description="EGF-like 3; calcium-binding" evidence="7">
    <location>
        <begin position="126"/>
        <end position="162"/>
    </location>
</feature>
<feature type="domain" description="EGF-like 4" evidence="7">
    <location>
        <begin position="175"/>
        <end position="211"/>
    </location>
</feature>
<feature type="domain" description="EGF-like 5" evidence="7">
    <location>
        <begin position="215"/>
        <end position="250"/>
    </location>
</feature>
<feature type="domain" description="EGF-like 6" evidence="7">
    <location>
        <begin position="284"/>
        <end position="319"/>
    </location>
</feature>
<feature type="domain" description="EGF-like 7; calcium-binding" evidence="7">
    <location>
        <begin position="321"/>
        <end position="361"/>
    </location>
</feature>
<feature type="domain" description="EGF-like 8; calcium-binding" evidence="7">
    <location>
        <begin position="362"/>
        <end position="400"/>
    </location>
</feature>
<feature type="domain" description="EGF-like 9; calcium-binding" evidence="7">
    <location>
        <begin position="401"/>
        <end position="441"/>
    </location>
</feature>
<feature type="domain" description="CUB" evidence="6">
    <location>
        <begin position="807"/>
        <end position="919"/>
    </location>
</feature>
<feature type="region of interest" description="Interaction with the cholesterol-anchor of SHH" evidence="10">
    <location>
        <begin position="845"/>
        <end position="854"/>
    </location>
</feature>
<feature type="glycosylation site" description="N-linked (GlcNAc...) asparagine" evidence="5">
    <location>
        <position position="657"/>
    </location>
</feature>
<feature type="disulfide bond" evidence="1">
    <location>
        <begin position="47"/>
        <end position="60"/>
    </location>
</feature>
<feature type="disulfide bond" evidence="1">
    <location>
        <begin position="54"/>
        <end position="69"/>
    </location>
</feature>
<feature type="disulfide bond" evidence="1">
    <location>
        <begin position="71"/>
        <end position="82"/>
    </location>
</feature>
<feature type="disulfide bond" evidence="1">
    <location>
        <begin position="88"/>
        <end position="100"/>
    </location>
</feature>
<feature type="disulfide bond" evidence="1">
    <location>
        <begin position="96"/>
        <end position="109"/>
    </location>
</feature>
<feature type="disulfide bond" evidence="1">
    <location>
        <begin position="111"/>
        <end position="124"/>
    </location>
</feature>
<feature type="disulfide bond" evidence="1">
    <location>
        <begin position="130"/>
        <end position="141"/>
    </location>
</feature>
<feature type="disulfide bond" evidence="1">
    <location>
        <begin position="137"/>
        <end position="150"/>
    </location>
</feature>
<feature type="disulfide bond" evidence="1">
    <location>
        <begin position="325"/>
        <end position="336"/>
    </location>
</feature>
<feature type="disulfide bond" evidence="1">
    <location>
        <begin position="332"/>
        <end position="345"/>
    </location>
</feature>
<feature type="disulfide bond" evidence="1">
    <location>
        <begin position="347"/>
        <end position="360"/>
    </location>
</feature>
<feature type="disulfide bond" evidence="1">
    <location>
        <begin position="366"/>
        <end position="376"/>
    </location>
</feature>
<feature type="disulfide bond" evidence="1">
    <location>
        <begin position="372"/>
        <end position="385"/>
    </location>
</feature>
<feature type="disulfide bond" evidence="1">
    <location>
        <begin position="387"/>
        <end position="399"/>
    </location>
</feature>
<feature type="disulfide bond" evidence="1">
    <location>
        <begin position="405"/>
        <end position="416"/>
    </location>
</feature>
<feature type="disulfide bond" evidence="1">
    <location>
        <begin position="412"/>
        <end position="425"/>
    </location>
</feature>
<feature type="disulfide bond" evidence="1">
    <location>
        <begin position="427"/>
        <end position="440"/>
    </location>
</feature>
<feature type="disulfide bond" evidence="1">
    <location>
        <begin position="807"/>
        <end position="833"/>
    </location>
</feature>
<feature type="disulfide bond" evidence="1">
    <location>
        <begin position="860"/>
        <end position="881"/>
    </location>
</feature>
<feature type="mutagenesis site" description="No interaction with SHH and no secretion of SHH." evidence="10">
    <original>ILIVVPEIFL</original>
    <variation>AAAAAPEAAA</variation>
    <location>
        <begin position="845"/>
        <end position="854"/>
    </location>
</feature>
<protein>
    <recommendedName>
        <fullName evidence="4">Signal peptide, CUB and EGF-like domain-containing protein 2</fullName>
    </recommendedName>
    <alternativeName>
        <fullName>Protein CEGP1</fullName>
    </alternativeName>
    <alternativeName>
        <fullName evidence="13">Scube/You</fullName>
    </alternativeName>
</protein>
<reference key="1">
    <citation type="journal article" date="2001" name="Cytogenet. Cell Genet.">
        <title>Comparative genomic sequencing reveals a strikingly similar architecture of a conserved syntenic region on human chromosome 11p15.3 (including gene ST5) and mouse chromosome 7.</title>
        <authorList>
            <person name="Amid C."/>
            <person name="Bahr A."/>
            <person name="Mujica A."/>
            <person name="Sampson N."/>
            <person name="Bikar S.E."/>
            <person name="Winterpacht A."/>
            <person name="Zabel B."/>
            <person name="Hankeln T."/>
            <person name="Schmidt E.R."/>
        </authorList>
    </citation>
    <scope>NUCLEOTIDE SEQUENCE [GENOMIC DNA]</scope>
</reference>
<reference key="2">
    <citation type="journal article" date="2001" name="Mech. Dev.">
        <title>Expression of a novel mammalian epidermal growth factor-related gene during mouse neural development.</title>
        <authorList>
            <person name="Grimmond S."/>
            <person name="Larder R."/>
            <person name="Van Hateren N."/>
            <person name="Siggers P."/>
            <person name="Morse S."/>
            <person name="Hacker T."/>
            <person name="Arkell R."/>
            <person name="Greenfield A."/>
        </authorList>
    </citation>
    <scope>TISSUE SPECIFICITY</scope>
    <scope>DEVELOPMENTAL STAGE</scope>
</reference>
<reference key="3">
    <citation type="journal article" date="2012" name="Genes Dev.">
        <title>Scube/You activity mediates release of dually lipid-modified Hedgehog signal in soluble form.</title>
        <authorList>
            <person name="Creanga A."/>
            <person name="Glenn T.D."/>
            <person name="Mann R.K."/>
            <person name="Saunders A.M."/>
            <person name="Talbot W.S."/>
            <person name="Beachy P.A."/>
        </authorList>
    </citation>
    <scope>FUNCTION</scope>
    <scope>INTERACTION WITH SHH</scope>
    <scope>SUBUNIT</scope>
</reference>
<reference key="4">
    <citation type="journal article" date="2012" name="Cell Rep.">
        <title>Dispatched and scube mediate the efficient secretion of the cholesterol-modified hedgehog ligand.</title>
        <authorList>
            <person name="Tukachinsky H."/>
            <person name="Kuzmickas R.P."/>
            <person name="Jao C.Y."/>
            <person name="Liu J."/>
            <person name="Salic A."/>
        </authorList>
    </citation>
    <scope>MUTAGENESIS OF 845-ILE--ILE-854</scope>
    <scope>FUNCTION</scope>
    <scope>INTERACTION WITH SHH</scope>
    <scope>SUBUNIT</scope>
</reference>
<reference key="5">
    <citation type="journal article" date="2014" name="J. Cell Sci.">
        <title>Scube2 enhances proteolytic Shh processing from the surface of Shh-producing cells.</title>
        <authorList>
            <person name="Jakobs P."/>
            <person name="Exner S."/>
            <person name="Schuermann S."/>
            <person name="Pickhinke U."/>
            <person name="Bandari S."/>
            <person name="Ortmann C."/>
            <person name="Kupich S."/>
            <person name="Schulz P."/>
            <person name="Hansen U."/>
            <person name="Seidler D.G."/>
            <person name="Grobe K."/>
        </authorList>
    </citation>
    <scope>INTERACTION WITH SHH</scope>
    <scope>FUNCTION</scope>
    <scope>SUBUNIT</scope>
    <scope>DOMAIN</scope>
</reference>
<reference key="6">
    <citation type="journal article" date="2016" name="Dev. Biol.">
        <title>Hedgehog receptor function during craniofacial development.</title>
        <authorList>
            <person name="Xavier G.M."/>
            <person name="Seppala M."/>
            <person name="Barrell W."/>
            <person name="Birjandi A.A."/>
            <person name="Geoghegan F."/>
            <person name="Cobourne M.T."/>
        </authorList>
    </citation>
    <scope>REVIEW</scope>
    <scope>FUNCTION</scope>
</reference>
<reference key="7">
    <citation type="journal article" date="2017" name="Arterioscler. Thromb. Vasc. Biol.">
        <title>Endothelial SCUBE2 interacts with VEGFR2 and regulates VEGF-induced angiogenesis.</title>
        <authorList>
            <person name="Lin Y.C."/>
            <person name="Chao T.Y."/>
            <person name="Yeh C.T."/>
            <person name="Roffler S.R."/>
            <person name="Kannagi R."/>
            <person name="Yang R.B."/>
        </authorList>
    </citation>
    <scope>DISRUPTION PHENOTYPE</scope>
    <scope>FUNCTION</scope>
    <scope>INTERACTION WITH VEGFR2</scope>
    <scope>SUBUNIT</scope>
</reference>
<keyword id="KW-0106">Calcium</keyword>
<keyword id="KW-0217">Developmental protein</keyword>
<keyword id="KW-1015">Disulfide bond</keyword>
<keyword id="KW-0245">EGF-like domain</keyword>
<keyword id="KW-0325">Glycoprotein</keyword>
<keyword id="KW-0446">Lipid-binding</keyword>
<keyword id="KW-1185">Reference proteome</keyword>
<keyword id="KW-0677">Repeat</keyword>
<keyword id="KW-0964">Secreted</keyword>
<keyword id="KW-0732">Signal</keyword>
<dbReference type="EMBL" id="AJ400878">
    <property type="protein sequence ID" value="CAB92293.1"/>
    <property type="molecule type" value="Genomic_DNA"/>
</dbReference>
<dbReference type="FunCoup" id="Q9JJS0">
    <property type="interactions" value="76"/>
</dbReference>
<dbReference type="STRING" id="10090.ENSMUSP00000102340"/>
<dbReference type="GlyCosmos" id="Q9JJS0">
    <property type="glycosylation" value="1 site, No reported glycans"/>
</dbReference>
<dbReference type="GlyGen" id="Q9JJS0">
    <property type="glycosylation" value="4 sites, 3 N-linked glycans (3 sites)"/>
</dbReference>
<dbReference type="iPTMnet" id="Q9JJS0"/>
<dbReference type="PhosphoSitePlus" id="Q9JJS0"/>
<dbReference type="PaxDb" id="10090-ENSMUSP00000007423"/>
<dbReference type="ProteomicsDB" id="255502"/>
<dbReference type="Antibodypedia" id="1601">
    <property type="antibodies" value="172 antibodies from 26 providers"/>
</dbReference>
<dbReference type="Ensembl" id="ENSMUST00000007423.12">
    <property type="protein sequence ID" value="ENSMUSP00000007423.6"/>
    <property type="gene ID" value="ENSMUSG00000007279.15"/>
</dbReference>
<dbReference type="UCSC" id="uc009jei.2">
    <property type="organism name" value="mouse"/>
</dbReference>
<dbReference type="AGR" id="MGI:1928765"/>
<dbReference type="MGI" id="MGI:1928765">
    <property type="gene designation" value="Scube2"/>
</dbReference>
<dbReference type="VEuPathDB" id="HostDB:ENSMUSG00000007279"/>
<dbReference type="eggNOG" id="KOG1217">
    <property type="taxonomic scope" value="Eukaryota"/>
</dbReference>
<dbReference type="GeneTree" id="ENSGT00940000153185"/>
<dbReference type="InParanoid" id="Q9JJS0"/>
<dbReference type="OMA" id="YIMHVDG"/>
<dbReference type="OrthoDB" id="4062651at2759"/>
<dbReference type="PhylomeDB" id="Q9JJS0"/>
<dbReference type="TreeFam" id="TF351672"/>
<dbReference type="Reactome" id="R-MMU-5362798">
    <property type="pathway name" value="Release of Hh-Np from the secreting cell"/>
</dbReference>
<dbReference type="ChiTaRS" id="Scube2">
    <property type="organism name" value="mouse"/>
</dbReference>
<dbReference type="PRO" id="PR:Q9JJS0"/>
<dbReference type="Proteomes" id="UP000000589">
    <property type="component" value="Chromosome 7"/>
</dbReference>
<dbReference type="RNAct" id="Q9JJS0">
    <property type="molecule type" value="protein"/>
</dbReference>
<dbReference type="Bgee" id="ENSMUSG00000007279">
    <property type="expression patterns" value="Expressed in interventricular septum and 140 other cell types or tissues"/>
</dbReference>
<dbReference type="ExpressionAtlas" id="Q9JJS0">
    <property type="expression patterns" value="baseline and differential"/>
</dbReference>
<dbReference type="GO" id="GO:0009986">
    <property type="term" value="C:cell surface"/>
    <property type="evidence" value="ECO:0007669"/>
    <property type="project" value="UniProtKB-SubCell"/>
</dbReference>
<dbReference type="GO" id="GO:0005615">
    <property type="term" value="C:extracellular space"/>
    <property type="evidence" value="ECO:0000314"/>
    <property type="project" value="MGI"/>
</dbReference>
<dbReference type="GO" id="GO:0019897">
    <property type="term" value="C:extrinsic component of plasma membrane"/>
    <property type="evidence" value="ECO:0000266"/>
    <property type="project" value="MGI"/>
</dbReference>
<dbReference type="GO" id="GO:0005509">
    <property type="term" value="F:calcium ion binding"/>
    <property type="evidence" value="ECO:0007669"/>
    <property type="project" value="InterPro"/>
</dbReference>
<dbReference type="GO" id="GO:0097108">
    <property type="term" value="F:hedgehog family protein binding"/>
    <property type="evidence" value="ECO:0000353"/>
    <property type="project" value="MGI"/>
</dbReference>
<dbReference type="GO" id="GO:0042802">
    <property type="term" value="F:identical protein binding"/>
    <property type="evidence" value="ECO:0000266"/>
    <property type="project" value="MGI"/>
</dbReference>
<dbReference type="GO" id="GO:0008289">
    <property type="term" value="F:lipid binding"/>
    <property type="evidence" value="ECO:0007669"/>
    <property type="project" value="UniProtKB-KW"/>
</dbReference>
<dbReference type="GO" id="GO:0003413">
    <property type="term" value="P:chondrocyte differentiation involved in endochondral bone morphogenesis"/>
    <property type="evidence" value="ECO:0000315"/>
    <property type="project" value="MGI"/>
</dbReference>
<dbReference type="GO" id="GO:1902732">
    <property type="term" value="P:positive regulation of chondrocyte proliferation"/>
    <property type="evidence" value="ECO:0000315"/>
    <property type="project" value="MGI"/>
</dbReference>
<dbReference type="GO" id="GO:0045778">
    <property type="term" value="P:positive regulation of ossification"/>
    <property type="evidence" value="ECO:0000315"/>
    <property type="project" value="MGI"/>
</dbReference>
<dbReference type="GO" id="GO:0045669">
    <property type="term" value="P:positive regulation of osteoblast differentiation"/>
    <property type="evidence" value="ECO:0000314"/>
    <property type="project" value="MGI"/>
</dbReference>
<dbReference type="GO" id="GO:0045880">
    <property type="term" value="P:positive regulation of smoothened signaling pathway"/>
    <property type="evidence" value="ECO:0000314"/>
    <property type="project" value="MGI"/>
</dbReference>
<dbReference type="CDD" id="cd00041">
    <property type="entry name" value="CUB"/>
    <property type="match status" value="1"/>
</dbReference>
<dbReference type="CDD" id="cd00054">
    <property type="entry name" value="EGF_CA"/>
    <property type="match status" value="1"/>
</dbReference>
<dbReference type="FunFam" id="2.10.25.10:FF:000032">
    <property type="entry name" value="signal peptide, CUB and EGF-like domain-containing protein 2 isoform X1"/>
    <property type="match status" value="1"/>
</dbReference>
<dbReference type="FunFam" id="2.10.50.10:FF:000002">
    <property type="entry name" value="signal peptide, CUB and EGF-like domain-containing protein 2 isoform X1"/>
    <property type="match status" value="1"/>
</dbReference>
<dbReference type="FunFam" id="2.10.25.10:FF:000199">
    <property type="entry name" value="signal peptide, CUB and EGF-like domain-containing protein 2 isoform X2"/>
    <property type="match status" value="1"/>
</dbReference>
<dbReference type="FunFam" id="2.10.25.10:FF:000237">
    <property type="entry name" value="Signal peptide, CUB domain and EGF like domain containing 2"/>
    <property type="match status" value="1"/>
</dbReference>
<dbReference type="FunFam" id="2.10.25.10:FF:000256">
    <property type="entry name" value="Signal peptide, CUB domain and EGF like domain containing 2"/>
    <property type="match status" value="1"/>
</dbReference>
<dbReference type="FunFam" id="2.10.50.10:FF:000028">
    <property type="entry name" value="Signal peptide, CUB domain and EGF like domain containing 2"/>
    <property type="match status" value="1"/>
</dbReference>
<dbReference type="FunFam" id="2.10.50.10:FF:000029">
    <property type="entry name" value="Signal peptide, CUB domain and EGF like domain containing 2"/>
    <property type="match status" value="1"/>
</dbReference>
<dbReference type="FunFam" id="2.10.25.10:FF:000028">
    <property type="entry name" value="Signal peptide, CUB domain and EGF-like domain-containing 2"/>
    <property type="match status" value="1"/>
</dbReference>
<dbReference type="FunFam" id="2.10.25.10:FF:000035">
    <property type="entry name" value="Signal peptide, CUB domain and EGF-like domain-containing 2"/>
    <property type="match status" value="1"/>
</dbReference>
<dbReference type="FunFam" id="2.10.25.10:FF:000037">
    <property type="entry name" value="Signal peptide, CUB domain and EGF-like domain-containing 2"/>
    <property type="match status" value="1"/>
</dbReference>
<dbReference type="FunFam" id="2.60.120.290:FF:000002">
    <property type="entry name" value="Signal peptide, CUB domain and EGF-like domain-containing 2"/>
    <property type="match status" value="1"/>
</dbReference>
<dbReference type="FunFam" id="2.10.25.10:FF:000008">
    <property type="entry name" value="Signal peptide, CUB domain, EGF-like 2"/>
    <property type="match status" value="1"/>
</dbReference>
<dbReference type="Gene3D" id="2.10.25.10">
    <property type="entry name" value="Laminin"/>
    <property type="match status" value="9"/>
</dbReference>
<dbReference type="Gene3D" id="2.60.120.290">
    <property type="entry name" value="Spermadhesin, CUB domain"/>
    <property type="match status" value="1"/>
</dbReference>
<dbReference type="Gene3D" id="2.10.50.10">
    <property type="entry name" value="Tumor Necrosis Factor Receptor, subunit A, domain 2"/>
    <property type="match status" value="3"/>
</dbReference>
<dbReference type="InterPro" id="IPR026823">
    <property type="entry name" value="cEGF"/>
</dbReference>
<dbReference type="InterPro" id="IPR000859">
    <property type="entry name" value="CUB_dom"/>
</dbReference>
<dbReference type="InterPro" id="IPR001881">
    <property type="entry name" value="EGF-like_Ca-bd_dom"/>
</dbReference>
<dbReference type="InterPro" id="IPR000742">
    <property type="entry name" value="EGF-like_dom"/>
</dbReference>
<dbReference type="InterPro" id="IPR000152">
    <property type="entry name" value="EGF-type_Asp/Asn_hydroxyl_site"/>
</dbReference>
<dbReference type="InterPro" id="IPR018097">
    <property type="entry name" value="EGF_Ca-bd_CS"/>
</dbReference>
<dbReference type="InterPro" id="IPR024731">
    <property type="entry name" value="EGF_dom"/>
</dbReference>
<dbReference type="InterPro" id="IPR009030">
    <property type="entry name" value="Growth_fac_rcpt_cys_sf"/>
</dbReference>
<dbReference type="InterPro" id="IPR049883">
    <property type="entry name" value="NOTCH1_EGF-like"/>
</dbReference>
<dbReference type="InterPro" id="IPR052071">
    <property type="entry name" value="SCUB_EGF-like_domain"/>
</dbReference>
<dbReference type="InterPro" id="IPR035914">
    <property type="entry name" value="Sperma_CUB_dom_sf"/>
</dbReference>
<dbReference type="InterPro" id="IPR011641">
    <property type="entry name" value="Tyr-kin_ephrin_A/B_rcpt-like"/>
</dbReference>
<dbReference type="PANTHER" id="PTHR24046">
    <property type="entry name" value="SIGNAL PEPTIDE, CUB AND EGF-LIKE DOMAIN-CONTAINING"/>
    <property type="match status" value="1"/>
</dbReference>
<dbReference type="PANTHER" id="PTHR24046:SF3">
    <property type="entry name" value="SIGNAL PEPTIDE, CUB AND EGF-LIKE DOMAIN-CONTAINING PROTEIN 2"/>
    <property type="match status" value="1"/>
</dbReference>
<dbReference type="Pfam" id="PF12662">
    <property type="entry name" value="cEGF"/>
    <property type="match status" value="1"/>
</dbReference>
<dbReference type="Pfam" id="PF00431">
    <property type="entry name" value="CUB"/>
    <property type="match status" value="1"/>
</dbReference>
<dbReference type="Pfam" id="PF12947">
    <property type="entry name" value="EGF_3"/>
    <property type="match status" value="1"/>
</dbReference>
<dbReference type="Pfam" id="PF07645">
    <property type="entry name" value="EGF_CA"/>
    <property type="match status" value="1"/>
</dbReference>
<dbReference type="Pfam" id="PF07699">
    <property type="entry name" value="Ephrin_rec_like"/>
    <property type="match status" value="3"/>
</dbReference>
<dbReference type="Pfam" id="PF14670">
    <property type="entry name" value="FXa_inhibition"/>
    <property type="match status" value="4"/>
</dbReference>
<dbReference type="SMART" id="SM00042">
    <property type="entry name" value="CUB"/>
    <property type="match status" value="1"/>
</dbReference>
<dbReference type="SMART" id="SM00181">
    <property type="entry name" value="EGF"/>
    <property type="match status" value="10"/>
</dbReference>
<dbReference type="SMART" id="SM00179">
    <property type="entry name" value="EGF_CA"/>
    <property type="match status" value="7"/>
</dbReference>
<dbReference type="SMART" id="SM01411">
    <property type="entry name" value="Ephrin_rec_like"/>
    <property type="match status" value="3"/>
</dbReference>
<dbReference type="SUPFAM" id="SSF57196">
    <property type="entry name" value="EGF/Laminin"/>
    <property type="match status" value="1"/>
</dbReference>
<dbReference type="SUPFAM" id="SSF57184">
    <property type="entry name" value="Growth factor receptor domain"/>
    <property type="match status" value="4"/>
</dbReference>
<dbReference type="SUPFAM" id="SSF49854">
    <property type="entry name" value="Spermadhesin, CUB domain"/>
    <property type="match status" value="1"/>
</dbReference>
<dbReference type="PROSITE" id="PS00010">
    <property type="entry name" value="ASX_HYDROXYL"/>
    <property type="match status" value="6"/>
</dbReference>
<dbReference type="PROSITE" id="PS01180">
    <property type="entry name" value="CUB"/>
    <property type="match status" value="1"/>
</dbReference>
<dbReference type="PROSITE" id="PS01186">
    <property type="entry name" value="EGF_2"/>
    <property type="match status" value="8"/>
</dbReference>
<dbReference type="PROSITE" id="PS50026">
    <property type="entry name" value="EGF_3"/>
    <property type="match status" value="6"/>
</dbReference>
<dbReference type="PROSITE" id="PS01187">
    <property type="entry name" value="EGF_CA"/>
    <property type="match status" value="6"/>
</dbReference>
<accession>Q9JJS0</accession>
<sequence>MGVAGCGRPREARALLLLLLLLPPLLAAAVPPDRGLTNGPSEDVDECAQGLDDCHADALCQNTPTSYKCSCKPGYQGEGRQCEDMDECDNTLNGGCVHDCLNIPGNYRCTCFDGFMLAHDGHNCLDMDECLENNGGCQHICTNVIGSYECRCKEGFFLSDNQHTCIHRSEEGLSCMNKDHGCGHICKEAPRGSVACECRPGFELAKNQKDCILTCNHGNGGCQHSCEDTAEGPECSCHPRYRLHADGRSCLEQEGTVLEGTESNATSVADGDKRVKRRLLMETCAVNNGGCDRTCKDTSTGVHCSCPTGFTLQVDGKTCKDIDECQTRNGGCNHFCKNTVGSFDCSCKKGFKLLTDEKSCQDVDECSLERTCDHSCINHPGTFICACNPGYTLYSFTHCGDTNECSVNNGGCQQVCINTVGSYECQCHPGFKLHWNKKDCVEVKGFPPTSMTPRVSLHCGKSGGGDRCFLRCRSGIHLSSDVVTVRTSVTFKLNEGKCSLQKAKLSPEGLRPALPERHSSVKESFQYANLTCSPGKQVPGALGRLNAPKEMFITVEFERETYEKEVTASCNLSCVVKRTEKRLRKALRTLKRAAHREQFHLQLSGMDLDMAKTPSRVSGQHEETCGVGQGHEESQCVSCRAGTYYDGSQERCILCPNGTFQNEEGQVTCEPCPRPENLGSLKISEAWNVSDCGGLCQPGEYSANGFAPCQLCALGTFQPDVGRTSCLSCGGGLPTKHLGATSFQDCETRVQCSPGHFYNTTTHRCIRCPLGTYQPEFGKNNCVSCPGNTTTDFDGSTNITQCKNRKCGGELGDFTGYIESPNYPGNYPANSECTWTINPPPKRRILIVVPEIFLPIEDDCGDYLVMRKTSSSNSVTTYETCQTYERPIAFTSRSKKLWIQFKSNEGNSARGFQVPYVTYDEDYQELIEDIVRDGRLYASENHQEILKDKKLIKALFDVLAHPQNYFKYTAQESREMFPRSFIRLLRSKVSRFLRPYK</sequence>
<gene>
    <name evidence="14" type="primary">Scube2</name>
    <name type="synonym">Cegp1</name>
</gene>
<organism>
    <name type="scientific">Mus musculus</name>
    <name type="common">Mouse</name>
    <dbReference type="NCBI Taxonomy" id="10090"/>
    <lineage>
        <taxon>Eukaryota</taxon>
        <taxon>Metazoa</taxon>
        <taxon>Chordata</taxon>
        <taxon>Craniata</taxon>
        <taxon>Vertebrata</taxon>
        <taxon>Euteleostomi</taxon>
        <taxon>Mammalia</taxon>
        <taxon>Eutheria</taxon>
        <taxon>Euarchontoglires</taxon>
        <taxon>Glires</taxon>
        <taxon>Rodentia</taxon>
        <taxon>Myomorpha</taxon>
        <taxon>Muroidea</taxon>
        <taxon>Muridae</taxon>
        <taxon>Murinae</taxon>
        <taxon>Mus</taxon>
        <taxon>Mus</taxon>
    </lineage>
</organism>
<name>SCUB2_MOUSE</name>